<gene>
    <name evidence="1" type="primary">glmS</name>
    <name type="ordered locus">TC_0203</name>
</gene>
<proteinExistence type="inferred from homology"/>
<sequence>MCGIFGYLGQRNAVPLVLEGLSKLEYRGYDSAGIAALTKDHLFVEKSVGPVSQLCSKVSSDMHSQVAIGHTRWATHGEPSRFNAHPHVDMYESCALVHNGIIENFQTLREDLSSKGVEFSSDTDTEVIVQLFASRYRETGDLVQSFSWTLKQLQGSFACALVHQDHPEILLCATYESPLILGLGEEEVFISSDVHAFLKYSCQIQTLASGELAVLRIGRPVEIYNFELSRIQKEVRCIDHAEGSLDKQGFDYYMLKEIYEQPEVFERILHFVCEENGFAESFLKEFSFEGIESLHIVACGSSYHAGCLAKYVIESMVSIPVYVETASEFRYRQPYIAKRSLAILISQSGETADTLAALNEFRKLDEVRVLGICNVRGSVLASRVDHCVFIEAGLEVGVASTKAFTAQLLVLILLGLKLASQRQEISKQDLMQAVQGLRELPRLTRLFLDSSIHDWRCRQSKETSFIFLGRRFMYPICMEAALKLKEIAYVEANAYPAGEMKHGPIALIQEGTPVIVYCGDPFVYTKTIGAIMEVKARKAYVIALARESNQDIAAVSDEQIYIPDSHDLAAPILFAIAGQIMAYTMALQKGTEVDRPRNLAKSVTVE</sequence>
<reference key="1">
    <citation type="journal article" date="2000" name="Nucleic Acids Res.">
        <title>Genome sequences of Chlamydia trachomatis MoPn and Chlamydia pneumoniae AR39.</title>
        <authorList>
            <person name="Read T.D."/>
            <person name="Brunham R.C."/>
            <person name="Shen C."/>
            <person name="Gill S.R."/>
            <person name="Heidelberg J.F."/>
            <person name="White O."/>
            <person name="Hickey E.K."/>
            <person name="Peterson J.D."/>
            <person name="Utterback T.R."/>
            <person name="Berry K.J."/>
            <person name="Bass S."/>
            <person name="Linher K.D."/>
            <person name="Weidman J.F."/>
            <person name="Khouri H.M."/>
            <person name="Craven B."/>
            <person name="Bowman C."/>
            <person name="Dodson R.J."/>
            <person name="Gwinn M.L."/>
            <person name="Nelson W.C."/>
            <person name="DeBoy R.T."/>
            <person name="Kolonay J.F."/>
            <person name="McClarty G."/>
            <person name="Salzberg S.L."/>
            <person name="Eisen J.A."/>
            <person name="Fraser C.M."/>
        </authorList>
    </citation>
    <scope>NUCLEOTIDE SEQUENCE [LARGE SCALE GENOMIC DNA]</scope>
    <source>
        <strain>MoPn / Nigg</strain>
    </source>
</reference>
<dbReference type="EC" id="2.6.1.16" evidence="1"/>
<dbReference type="EMBL" id="AE002160">
    <property type="protein sequence ID" value="AAF39075.1"/>
    <property type="molecule type" value="Genomic_DNA"/>
</dbReference>
<dbReference type="PIR" id="B81729">
    <property type="entry name" value="B81729"/>
</dbReference>
<dbReference type="RefSeq" id="WP_010229805.1">
    <property type="nucleotide sequence ID" value="NZ_CP063055.1"/>
</dbReference>
<dbReference type="SMR" id="Q9PLA4"/>
<dbReference type="GeneID" id="1246329"/>
<dbReference type="KEGG" id="cmu:TC_0203"/>
<dbReference type="eggNOG" id="COG0449">
    <property type="taxonomic scope" value="Bacteria"/>
</dbReference>
<dbReference type="HOGENOM" id="CLU_012520_5_2_0"/>
<dbReference type="OrthoDB" id="106547at2"/>
<dbReference type="Proteomes" id="UP000000800">
    <property type="component" value="Chromosome"/>
</dbReference>
<dbReference type="GO" id="GO:0005829">
    <property type="term" value="C:cytosol"/>
    <property type="evidence" value="ECO:0007669"/>
    <property type="project" value="TreeGrafter"/>
</dbReference>
<dbReference type="GO" id="GO:0097367">
    <property type="term" value="F:carbohydrate derivative binding"/>
    <property type="evidence" value="ECO:0007669"/>
    <property type="project" value="InterPro"/>
</dbReference>
<dbReference type="GO" id="GO:0004360">
    <property type="term" value="F:glutamine-fructose-6-phosphate transaminase (isomerizing) activity"/>
    <property type="evidence" value="ECO:0007669"/>
    <property type="project" value="UniProtKB-UniRule"/>
</dbReference>
<dbReference type="GO" id="GO:0005975">
    <property type="term" value="P:carbohydrate metabolic process"/>
    <property type="evidence" value="ECO:0007669"/>
    <property type="project" value="UniProtKB-UniRule"/>
</dbReference>
<dbReference type="GO" id="GO:0006002">
    <property type="term" value="P:fructose 6-phosphate metabolic process"/>
    <property type="evidence" value="ECO:0007669"/>
    <property type="project" value="TreeGrafter"/>
</dbReference>
<dbReference type="GO" id="GO:0006487">
    <property type="term" value="P:protein N-linked glycosylation"/>
    <property type="evidence" value="ECO:0007669"/>
    <property type="project" value="TreeGrafter"/>
</dbReference>
<dbReference type="GO" id="GO:0006047">
    <property type="term" value="P:UDP-N-acetylglucosamine metabolic process"/>
    <property type="evidence" value="ECO:0007669"/>
    <property type="project" value="TreeGrafter"/>
</dbReference>
<dbReference type="CDD" id="cd00714">
    <property type="entry name" value="GFAT"/>
    <property type="match status" value="1"/>
</dbReference>
<dbReference type="CDD" id="cd05008">
    <property type="entry name" value="SIS_GlmS_GlmD_1"/>
    <property type="match status" value="1"/>
</dbReference>
<dbReference type="CDD" id="cd05009">
    <property type="entry name" value="SIS_GlmS_GlmD_2"/>
    <property type="match status" value="1"/>
</dbReference>
<dbReference type="FunFam" id="3.40.50.10490:FF:000001">
    <property type="entry name" value="Glutamine--fructose-6-phosphate aminotransferase [isomerizing]"/>
    <property type="match status" value="1"/>
</dbReference>
<dbReference type="FunFam" id="3.60.20.10:FF:000006">
    <property type="entry name" value="Glutamine--fructose-6-phosphate aminotransferase [isomerizing]"/>
    <property type="match status" value="1"/>
</dbReference>
<dbReference type="Gene3D" id="3.40.50.10490">
    <property type="entry name" value="Glucose-6-phosphate isomerase like protein, domain 1"/>
    <property type="match status" value="2"/>
</dbReference>
<dbReference type="Gene3D" id="3.60.20.10">
    <property type="entry name" value="Glutamine Phosphoribosylpyrophosphate, subunit 1, domain 1"/>
    <property type="match status" value="1"/>
</dbReference>
<dbReference type="HAMAP" id="MF_00164">
    <property type="entry name" value="GlmS"/>
    <property type="match status" value="1"/>
</dbReference>
<dbReference type="InterPro" id="IPR017932">
    <property type="entry name" value="GATase_2_dom"/>
</dbReference>
<dbReference type="InterPro" id="IPR005855">
    <property type="entry name" value="GFAT"/>
</dbReference>
<dbReference type="InterPro" id="IPR047084">
    <property type="entry name" value="GFAT_N"/>
</dbReference>
<dbReference type="InterPro" id="IPR035466">
    <property type="entry name" value="GlmS/AgaS_SIS"/>
</dbReference>
<dbReference type="InterPro" id="IPR035490">
    <property type="entry name" value="GlmS/FrlB_SIS"/>
</dbReference>
<dbReference type="InterPro" id="IPR029055">
    <property type="entry name" value="Ntn_hydrolases_N"/>
</dbReference>
<dbReference type="InterPro" id="IPR001347">
    <property type="entry name" value="SIS_dom"/>
</dbReference>
<dbReference type="InterPro" id="IPR046348">
    <property type="entry name" value="SIS_dom_sf"/>
</dbReference>
<dbReference type="NCBIfam" id="TIGR01135">
    <property type="entry name" value="glmS"/>
    <property type="match status" value="1"/>
</dbReference>
<dbReference type="NCBIfam" id="NF001484">
    <property type="entry name" value="PRK00331.1"/>
    <property type="match status" value="1"/>
</dbReference>
<dbReference type="PANTHER" id="PTHR10937">
    <property type="entry name" value="GLUCOSAMINE--FRUCTOSE-6-PHOSPHATE AMINOTRANSFERASE, ISOMERIZING"/>
    <property type="match status" value="1"/>
</dbReference>
<dbReference type="PANTHER" id="PTHR10937:SF0">
    <property type="entry name" value="GLUTAMINE--FRUCTOSE-6-PHOSPHATE TRANSAMINASE (ISOMERIZING)"/>
    <property type="match status" value="1"/>
</dbReference>
<dbReference type="Pfam" id="PF13522">
    <property type="entry name" value="GATase_6"/>
    <property type="match status" value="1"/>
</dbReference>
<dbReference type="Pfam" id="PF01380">
    <property type="entry name" value="SIS"/>
    <property type="match status" value="2"/>
</dbReference>
<dbReference type="SUPFAM" id="SSF56235">
    <property type="entry name" value="N-terminal nucleophile aminohydrolases (Ntn hydrolases)"/>
    <property type="match status" value="1"/>
</dbReference>
<dbReference type="SUPFAM" id="SSF53697">
    <property type="entry name" value="SIS domain"/>
    <property type="match status" value="1"/>
</dbReference>
<dbReference type="PROSITE" id="PS51278">
    <property type="entry name" value="GATASE_TYPE_2"/>
    <property type="match status" value="1"/>
</dbReference>
<dbReference type="PROSITE" id="PS51464">
    <property type="entry name" value="SIS"/>
    <property type="match status" value="2"/>
</dbReference>
<comment type="function">
    <text evidence="1">Catalyzes the first step in hexosamine metabolism, converting fructose-6P into glucosamine-6P using glutamine as a nitrogen source.</text>
</comment>
<comment type="catalytic activity">
    <reaction evidence="1">
        <text>D-fructose 6-phosphate + L-glutamine = D-glucosamine 6-phosphate + L-glutamate</text>
        <dbReference type="Rhea" id="RHEA:13237"/>
        <dbReference type="ChEBI" id="CHEBI:29985"/>
        <dbReference type="ChEBI" id="CHEBI:58359"/>
        <dbReference type="ChEBI" id="CHEBI:58725"/>
        <dbReference type="ChEBI" id="CHEBI:61527"/>
        <dbReference type="EC" id="2.6.1.16"/>
    </reaction>
</comment>
<comment type="subunit">
    <text evidence="1">Homodimer.</text>
</comment>
<comment type="subcellular location">
    <subcellularLocation>
        <location evidence="1">Cytoplasm</location>
    </subcellularLocation>
</comment>
<keyword id="KW-0032">Aminotransferase</keyword>
<keyword id="KW-0963">Cytoplasm</keyword>
<keyword id="KW-0315">Glutamine amidotransferase</keyword>
<keyword id="KW-0677">Repeat</keyword>
<keyword id="KW-0808">Transferase</keyword>
<organism>
    <name type="scientific">Chlamydia muridarum (strain MoPn / Nigg)</name>
    <dbReference type="NCBI Taxonomy" id="243161"/>
    <lineage>
        <taxon>Bacteria</taxon>
        <taxon>Pseudomonadati</taxon>
        <taxon>Chlamydiota</taxon>
        <taxon>Chlamydiia</taxon>
        <taxon>Chlamydiales</taxon>
        <taxon>Chlamydiaceae</taxon>
        <taxon>Chlamydia/Chlamydophila group</taxon>
        <taxon>Chlamydia</taxon>
    </lineage>
</organism>
<protein>
    <recommendedName>
        <fullName evidence="1">Glutamine--fructose-6-phosphate aminotransferase [isomerizing]</fullName>
        <ecNumber evidence="1">2.6.1.16</ecNumber>
    </recommendedName>
    <alternativeName>
        <fullName evidence="1">D-fructose-6-phosphate amidotransferase</fullName>
    </alternativeName>
    <alternativeName>
        <fullName evidence="1">GFAT</fullName>
    </alternativeName>
    <alternativeName>
        <fullName evidence="1">Glucosamine-6-phosphate synthase</fullName>
    </alternativeName>
    <alternativeName>
        <fullName evidence="1">Hexosephosphate aminotransferase</fullName>
    </alternativeName>
    <alternativeName>
        <fullName evidence="1">L-glutamine--D-fructose-6-phosphate amidotransferase</fullName>
    </alternativeName>
</protein>
<feature type="initiator methionine" description="Removed" evidence="1">
    <location>
        <position position="1"/>
    </location>
</feature>
<feature type="chain" id="PRO_0000135318" description="Glutamine--fructose-6-phosphate aminotransferase [isomerizing]">
    <location>
        <begin position="2"/>
        <end position="606"/>
    </location>
</feature>
<feature type="domain" description="Glutamine amidotransferase type-2" evidence="1">
    <location>
        <begin position="2"/>
        <end position="218"/>
    </location>
</feature>
<feature type="domain" description="SIS 1" evidence="1">
    <location>
        <begin position="278"/>
        <end position="424"/>
    </location>
</feature>
<feature type="domain" description="SIS 2" evidence="1">
    <location>
        <begin position="455"/>
        <end position="596"/>
    </location>
</feature>
<feature type="active site" description="Nucleophile; for GATase activity" evidence="1">
    <location>
        <position position="2"/>
    </location>
</feature>
<feature type="active site" description="For Fru-6P isomerization activity" evidence="1">
    <location>
        <position position="601"/>
    </location>
</feature>
<name>GLMS_CHLMU</name>
<accession>Q9PLA4</accession>
<evidence type="ECO:0000255" key="1">
    <source>
        <dbReference type="HAMAP-Rule" id="MF_00164"/>
    </source>
</evidence>